<protein>
    <recommendedName>
        <fullName evidence="4">U2-sicaritoxin-Sdo1a</fullName>
        <shortName evidence="4">U2-SCRTX-Sdo1a</shortName>
    </recommendedName>
    <alternativeName>
        <fullName evidence="6">S67</fullName>
    </alternativeName>
    <alternativeName>
        <fullName evidence="3">U2-sicaritoxin-Sd1a</fullName>
        <shortName evidence="3">U2-SCRTX-Sd1a</shortName>
    </alternativeName>
</protein>
<comment type="subcellular location">
    <subcellularLocation>
        <location evidence="5">Secreted</location>
    </subcellularLocation>
</comment>
<comment type="tissue specificity">
    <text evidence="5">Expressed by the venom gland.</text>
</comment>
<comment type="domain">
    <text evidence="2">The presence of a 'disulfide through disulfide knot' structurally defines this protein as a knottin.</text>
</comment>
<comment type="caution">
    <text evidence="5">For expression reasons, the sequence was engineered with a Gly residue instead of a Pro at position 39.</text>
</comment>
<comment type="online information" name="Biological Magnetic Resonance Data Bank">
    <link uri="https://bmrb.io/data_library/summary/index.php?bmrbId=18600"/>
</comment>
<accession>M1E1F0</accession>
<evidence type="ECO:0000255" key="1"/>
<evidence type="ECO:0000269" key="2">
    <source>
    </source>
</evidence>
<evidence type="ECO:0000303" key="3">
    <source>
    </source>
</evidence>
<evidence type="ECO:0000305" key="4"/>
<evidence type="ECO:0000305" key="5">
    <source>
    </source>
</evidence>
<evidence type="ECO:0000312" key="6">
    <source>
        <dbReference type="PDB" id="4B2U"/>
    </source>
</evidence>
<evidence type="ECO:0007744" key="7">
    <source>
        <dbReference type="PDB" id="4B2U"/>
    </source>
</evidence>
<evidence type="ECO:0007829" key="8">
    <source>
        <dbReference type="PDB" id="4B2U"/>
    </source>
</evidence>
<name>KNO67_HEXDO</name>
<reference key="1">
    <citation type="journal article" date="2013" name="PLoS ONE">
        <title>Solution structures of two homologous venom peptides from Sicarius dolichocephalus.</title>
        <authorList>
            <person name="Loening N.M."/>
            <person name="Wilson Z.N."/>
            <person name="Zobel-Thropp P.A."/>
            <person name="Binford G.J."/>
        </authorList>
    </citation>
    <scope>NUCLEOTIDE SEQUENCE [MRNA]</scope>
    <scope>STRUCTURE BY NMR OF 39-74</scope>
    <scope>DISULFIDE BOND</scope>
    <source>
        <tissue>Venom gland</tissue>
    </source>
</reference>
<organism>
    <name type="scientific">Hexophthalma dolichocephala</name>
    <name type="common">Afrotropical spider</name>
    <name type="synonym">Sicarius dolichocephalus</name>
    <dbReference type="NCBI Taxonomy" id="2599099"/>
    <lineage>
        <taxon>Eukaryota</taxon>
        <taxon>Metazoa</taxon>
        <taxon>Ecdysozoa</taxon>
        <taxon>Arthropoda</taxon>
        <taxon>Chelicerata</taxon>
        <taxon>Arachnida</taxon>
        <taxon>Araneae</taxon>
        <taxon>Araneomorphae</taxon>
        <taxon>Haplogynae</taxon>
        <taxon>Scytodoidea</taxon>
        <taxon>Sicariidae</taxon>
        <taxon>Hexophthalma</taxon>
    </lineage>
</organism>
<feature type="signal peptide" evidence="1">
    <location>
        <begin position="1"/>
        <end position="20"/>
    </location>
</feature>
<feature type="propeptide" id="PRO_0000447420" evidence="5">
    <location>
        <begin position="21"/>
        <end position="39"/>
    </location>
</feature>
<feature type="peptide" id="PRO_0000447421" description="U2-sicaritoxin-Sdo1a" evidence="5">
    <location>
        <begin position="40"/>
        <end position="74"/>
    </location>
</feature>
<feature type="disulfide bond" evidence="2 7">
    <location>
        <begin position="42"/>
        <end position="59"/>
    </location>
</feature>
<feature type="disulfide bond" evidence="2 7">
    <location>
        <begin position="49"/>
        <end position="62"/>
    </location>
</feature>
<feature type="disulfide bond" evidence="2 7">
    <location>
        <begin position="58"/>
        <end position="71"/>
    </location>
</feature>
<feature type="helix" evidence="8">
    <location>
        <begin position="52"/>
        <end position="54"/>
    </location>
</feature>
<feature type="strand" evidence="8">
    <location>
        <begin position="57"/>
        <end position="65"/>
    </location>
</feature>
<feature type="strand" evidence="8">
    <location>
        <begin position="68"/>
        <end position="72"/>
    </location>
</feature>
<keyword id="KW-0002">3D-structure</keyword>
<keyword id="KW-1015">Disulfide bond</keyword>
<keyword id="KW-0960">Knottin</keyword>
<keyword id="KW-0964">Secreted</keyword>
<keyword id="KW-0732">Signal</keyword>
<sequence length="74" mass="8806">MKLSFCFFLCAIVLFSFAEARINPNQLKRLRELVRDDEPTYCIELGERCPNPREGDWCCHKCVPEGKRFYCRDQ</sequence>
<dbReference type="PDB" id="4B2U">
    <property type="method" value="NMR"/>
    <property type="chains" value="A=39-74"/>
</dbReference>
<dbReference type="PDBsum" id="4B2U"/>
<dbReference type="SMR" id="M1E1F0"/>
<dbReference type="ArachnoServer" id="AS002050">
    <property type="toxin name" value="U2-sicaritoxin-Sdo1a"/>
</dbReference>
<dbReference type="GO" id="GO:0005576">
    <property type="term" value="C:extracellular region"/>
    <property type="evidence" value="ECO:0007669"/>
    <property type="project" value="UniProtKB-SubCell"/>
</dbReference>
<proteinExistence type="evidence at protein level"/>